<keyword id="KW-0963">Cytoplasm</keyword>
<keyword id="KW-0460">Magnesium</keyword>
<keyword id="KW-0479">Metal-binding</keyword>
<keyword id="KW-0548">Nucleotidyltransferase</keyword>
<keyword id="KW-1185">Reference proteome</keyword>
<keyword id="KW-0694">RNA-binding</keyword>
<keyword id="KW-0808">Transferase</keyword>
<accession>Q5NGX7</accession>
<name>PNP_FRATT</name>
<protein>
    <recommendedName>
        <fullName evidence="1">Polyribonucleotide nucleotidyltransferase</fullName>
        <ecNumber evidence="1">2.7.7.8</ecNumber>
    </recommendedName>
    <alternativeName>
        <fullName evidence="1">Polynucleotide phosphorylase</fullName>
        <shortName evidence="1">PNPase</shortName>
    </alternativeName>
</protein>
<comment type="function">
    <text evidence="1">Involved in mRNA degradation. Catalyzes the phosphorolysis of single-stranded polyribonucleotides processively in the 3'- to 5'-direction.</text>
</comment>
<comment type="catalytic activity">
    <reaction evidence="1">
        <text>RNA(n+1) + phosphate = RNA(n) + a ribonucleoside 5'-diphosphate</text>
        <dbReference type="Rhea" id="RHEA:22096"/>
        <dbReference type="Rhea" id="RHEA-COMP:14527"/>
        <dbReference type="Rhea" id="RHEA-COMP:17342"/>
        <dbReference type="ChEBI" id="CHEBI:43474"/>
        <dbReference type="ChEBI" id="CHEBI:57930"/>
        <dbReference type="ChEBI" id="CHEBI:140395"/>
        <dbReference type="EC" id="2.7.7.8"/>
    </reaction>
</comment>
<comment type="cofactor">
    <cofactor evidence="1">
        <name>Mg(2+)</name>
        <dbReference type="ChEBI" id="CHEBI:18420"/>
    </cofactor>
</comment>
<comment type="subunit">
    <text evidence="1">Component of the RNA degradosome, which is a multiprotein complex involved in RNA processing and mRNA degradation.</text>
</comment>
<comment type="subcellular location">
    <subcellularLocation>
        <location evidence="1">Cytoplasm</location>
    </subcellularLocation>
</comment>
<comment type="similarity">
    <text evidence="1">Belongs to the polyribonucleotide nucleotidyltransferase family.</text>
</comment>
<organism>
    <name type="scientific">Francisella tularensis subsp. tularensis (strain SCHU S4 / Schu 4)</name>
    <dbReference type="NCBI Taxonomy" id="177416"/>
    <lineage>
        <taxon>Bacteria</taxon>
        <taxon>Pseudomonadati</taxon>
        <taxon>Pseudomonadota</taxon>
        <taxon>Gammaproteobacteria</taxon>
        <taxon>Thiotrichales</taxon>
        <taxon>Francisellaceae</taxon>
        <taxon>Francisella</taxon>
    </lineage>
</organism>
<reference key="1">
    <citation type="journal article" date="2005" name="Nat. Genet.">
        <title>The complete genome sequence of Francisella tularensis, the causative agent of tularemia.</title>
        <authorList>
            <person name="Larsson P."/>
            <person name="Oyston P.C.F."/>
            <person name="Chain P."/>
            <person name="Chu M.C."/>
            <person name="Duffield M."/>
            <person name="Fuxelius H.-H."/>
            <person name="Garcia E."/>
            <person name="Haelltorp G."/>
            <person name="Johansson D."/>
            <person name="Isherwood K.E."/>
            <person name="Karp P.D."/>
            <person name="Larsson E."/>
            <person name="Liu Y."/>
            <person name="Michell S."/>
            <person name="Prior J."/>
            <person name="Prior R."/>
            <person name="Malfatti S."/>
            <person name="Sjoestedt A."/>
            <person name="Svensson K."/>
            <person name="Thompson N."/>
            <person name="Vergez L."/>
            <person name="Wagg J.K."/>
            <person name="Wren B.W."/>
            <person name="Lindler L.E."/>
            <person name="Andersson S.G.E."/>
            <person name="Forsman M."/>
            <person name="Titball R.W."/>
        </authorList>
    </citation>
    <scope>NUCLEOTIDE SEQUENCE [LARGE SCALE GENOMIC DNA]</scope>
    <source>
        <strain>SCHU S4 / Schu 4</strain>
    </source>
</reference>
<sequence length="693" mass="75396">MKIFREVFELGNKEIILETGGMARQADGSVTVSCGNNVVLVTTVVKKSVADGTDFFPLSVHYLEKTYAAGKIPGGFLRREGRPSEEQILISRLIDRSIRPSFPDGFFNEIQIVATVLSYDGAFSPDILALIGASASLAISGAPYDDVVAGVRVGYTNGKYILNPNKQDLRDSDLDLVVSGTDDAILMVESEANSLPESVMLGGILYAHKHLKTIINSINRLAKVASKPRIEYSIYQINKFLKSQIKSQFFGEIKNAYTIASKQERNLKLNAIRKNVLEYIFSSDVDGNEYTEKEILEAFHDIEKDLVRSNILEGKPRIDGRCTETIRPINVKIGVLPGVHGSALFTRGETQALVVTTLGSDRDAQLVESLDGIEKCRYMLHYNFPPYSVGECGMVGMAPKRREIGHANLAKRATQAVFPNEEAYPYVVRVVSEILESNGSSSMATVCGSSLSMMDAGVPIAEPVAGIAMGLIKDGAKYAVLSDILGDEDHLGDMDFKVAGTRYGVTALQMDIKIKGISREILEQALEQARAGRLHILGIMNEVIKEHKEAVSDVAPQIHVMNINPAKIKDVVGRGGATVKGIVEKTGAQIDTSDSGEVKVFAKDKKSMDMAVAMIEEIVAEVEEGQVYKGKIVKLLDSGVFVNLLGSQDGYLPFSEIEQAGMKTNSLVEGQGLEVLVQNIDRGGRVKLSLVAR</sequence>
<gene>
    <name evidence="1" type="primary">pnp</name>
    <name type="ordered locus">FTT_0699</name>
</gene>
<proteinExistence type="inferred from homology"/>
<evidence type="ECO:0000255" key="1">
    <source>
        <dbReference type="HAMAP-Rule" id="MF_01595"/>
    </source>
</evidence>
<feature type="chain" id="PRO_0000329653" description="Polyribonucleotide nucleotidyltransferase">
    <location>
        <begin position="1"/>
        <end position="693"/>
    </location>
</feature>
<feature type="domain" description="KH" evidence="1">
    <location>
        <begin position="556"/>
        <end position="615"/>
    </location>
</feature>
<feature type="domain" description="S1 motif" evidence="1">
    <location>
        <begin position="625"/>
        <end position="693"/>
    </location>
</feature>
<feature type="binding site" evidence="1">
    <location>
        <position position="489"/>
    </location>
    <ligand>
        <name>Mg(2+)</name>
        <dbReference type="ChEBI" id="CHEBI:18420"/>
    </ligand>
</feature>
<feature type="binding site" evidence="1">
    <location>
        <position position="495"/>
    </location>
    <ligand>
        <name>Mg(2+)</name>
        <dbReference type="ChEBI" id="CHEBI:18420"/>
    </ligand>
</feature>
<dbReference type="EC" id="2.7.7.8" evidence="1"/>
<dbReference type="EMBL" id="AJ749949">
    <property type="protein sequence ID" value="CAG45332.1"/>
    <property type="molecule type" value="Genomic_DNA"/>
</dbReference>
<dbReference type="RefSeq" id="WP_003020501.1">
    <property type="nucleotide sequence ID" value="NC_006570.2"/>
</dbReference>
<dbReference type="RefSeq" id="YP_169715.1">
    <property type="nucleotide sequence ID" value="NC_006570.2"/>
</dbReference>
<dbReference type="SMR" id="Q5NGX7"/>
<dbReference type="IntAct" id="Q5NGX7">
    <property type="interactions" value="5"/>
</dbReference>
<dbReference type="STRING" id="177416.FTT_0699"/>
<dbReference type="DNASU" id="3191115"/>
<dbReference type="EnsemblBacteria" id="CAG45332">
    <property type="protein sequence ID" value="CAG45332"/>
    <property type="gene ID" value="FTT_0699"/>
</dbReference>
<dbReference type="KEGG" id="ftu:FTT_0699"/>
<dbReference type="eggNOG" id="COG1185">
    <property type="taxonomic scope" value="Bacteria"/>
</dbReference>
<dbReference type="OrthoDB" id="9804305at2"/>
<dbReference type="Proteomes" id="UP000001174">
    <property type="component" value="Chromosome"/>
</dbReference>
<dbReference type="GO" id="GO:0005829">
    <property type="term" value="C:cytosol"/>
    <property type="evidence" value="ECO:0007669"/>
    <property type="project" value="TreeGrafter"/>
</dbReference>
<dbReference type="GO" id="GO:0000175">
    <property type="term" value="F:3'-5'-RNA exonuclease activity"/>
    <property type="evidence" value="ECO:0007669"/>
    <property type="project" value="TreeGrafter"/>
</dbReference>
<dbReference type="GO" id="GO:0000287">
    <property type="term" value="F:magnesium ion binding"/>
    <property type="evidence" value="ECO:0007669"/>
    <property type="project" value="UniProtKB-UniRule"/>
</dbReference>
<dbReference type="GO" id="GO:0004654">
    <property type="term" value="F:polyribonucleotide nucleotidyltransferase activity"/>
    <property type="evidence" value="ECO:0007669"/>
    <property type="project" value="UniProtKB-UniRule"/>
</dbReference>
<dbReference type="GO" id="GO:0003723">
    <property type="term" value="F:RNA binding"/>
    <property type="evidence" value="ECO:0007669"/>
    <property type="project" value="UniProtKB-UniRule"/>
</dbReference>
<dbReference type="GO" id="GO:0006402">
    <property type="term" value="P:mRNA catabolic process"/>
    <property type="evidence" value="ECO:0007669"/>
    <property type="project" value="UniProtKB-UniRule"/>
</dbReference>
<dbReference type="GO" id="GO:0006396">
    <property type="term" value="P:RNA processing"/>
    <property type="evidence" value="ECO:0007669"/>
    <property type="project" value="InterPro"/>
</dbReference>
<dbReference type="CDD" id="cd02393">
    <property type="entry name" value="KH-I_PNPase"/>
    <property type="match status" value="1"/>
</dbReference>
<dbReference type="CDD" id="cd11364">
    <property type="entry name" value="RNase_PH_PNPase_2"/>
    <property type="match status" value="1"/>
</dbReference>
<dbReference type="FunFam" id="3.30.1370.10:FF:000001">
    <property type="entry name" value="Polyribonucleotide nucleotidyltransferase"/>
    <property type="match status" value="1"/>
</dbReference>
<dbReference type="FunFam" id="3.30.230.70:FF:000001">
    <property type="entry name" value="Polyribonucleotide nucleotidyltransferase"/>
    <property type="match status" value="1"/>
</dbReference>
<dbReference type="FunFam" id="3.30.230.70:FF:000002">
    <property type="entry name" value="Polyribonucleotide nucleotidyltransferase"/>
    <property type="match status" value="1"/>
</dbReference>
<dbReference type="Gene3D" id="3.30.230.70">
    <property type="entry name" value="GHMP Kinase, N-terminal domain"/>
    <property type="match status" value="2"/>
</dbReference>
<dbReference type="Gene3D" id="3.30.1370.10">
    <property type="entry name" value="K Homology domain, type 1"/>
    <property type="match status" value="1"/>
</dbReference>
<dbReference type="Gene3D" id="2.40.50.140">
    <property type="entry name" value="Nucleic acid-binding proteins"/>
    <property type="match status" value="1"/>
</dbReference>
<dbReference type="HAMAP" id="MF_01595">
    <property type="entry name" value="PNPase"/>
    <property type="match status" value="1"/>
</dbReference>
<dbReference type="InterPro" id="IPR001247">
    <property type="entry name" value="ExoRNase_PH_dom1"/>
</dbReference>
<dbReference type="InterPro" id="IPR015847">
    <property type="entry name" value="ExoRNase_PH_dom2"/>
</dbReference>
<dbReference type="InterPro" id="IPR036345">
    <property type="entry name" value="ExoRNase_PH_dom2_sf"/>
</dbReference>
<dbReference type="InterPro" id="IPR004087">
    <property type="entry name" value="KH_dom"/>
</dbReference>
<dbReference type="InterPro" id="IPR004088">
    <property type="entry name" value="KH_dom_type_1"/>
</dbReference>
<dbReference type="InterPro" id="IPR036612">
    <property type="entry name" value="KH_dom_type_1_sf"/>
</dbReference>
<dbReference type="InterPro" id="IPR012340">
    <property type="entry name" value="NA-bd_OB-fold"/>
</dbReference>
<dbReference type="InterPro" id="IPR012162">
    <property type="entry name" value="PNPase"/>
</dbReference>
<dbReference type="InterPro" id="IPR027408">
    <property type="entry name" value="PNPase/RNase_PH_dom_sf"/>
</dbReference>
<dbReference type="InterPro" id="IPR015848">
    <property type="entry name" value="PNPase_PH_RNA-bd_bac/org-type"/>
</dbReference>
<dbReference type="InterPro" id="IPR036456">
    <property type="entry name" value="PNPase_PH_RNA-bd_sf"/>
</dbReference>
<dbReference type="InterPro" id="IPR020568">
    <property type="entry name" value="Ribosomal_Su5_D2-typ_SF"/>
</dbReference>
<dbReference type="InterPro" id="IPR003029">
    <property type="entry name" value="S1_domain"/>
</dbReference>
<dbReference type="NCBIfam" id="TIGR03591">
    <property type="entry name" value="polynuc_phos"/>
    <property type="match status" value="1"/>
</dbReference>
<dbReference type="NCBIfam" id="NF008805">
    <property type="entry name" value="PRK11824.1"/>
    <property type="match status" value="1"/>
</dbReference>
<dbReference type="PANTHER" id="PTHR11252">
    <property type="entry name" value="POLYRIBONUCLEOTIDE NUCLEOTIDYLTRANSFERASE"/>
    <property type="match status" value="1"/>
</dbReference>
<dbReference type="PANTHER" id="PTHR11252:SF0">
    <property type="entry name" value="POLYRIBONUCLEOTIDE NUCLEOTIDYLTRANSFERASE 1, MITOCHONDRIAL"/>
    <property type="match status" value="1"/>
</dbReference>
<dbReference type="Pfam" id="PF00013">
    <property type="entry name" value="KH_1"/>
    <property type="match status" value="1"/>
</dbReference>
<dbReference type="Pfam" id="PF03726">
    <property type="entry name" value="PNPase"/>
    <property type="match status" value="1"/>
</dbReference>
<dbReference type="Pfam" id="PF01138">
    <property type="entry name" value="RNase_PH"/>
    <property type="match status" value="2"/>
</dbReference>
<dbReference type="Pfam" id="PF03725">
    <property type="entry name" value="RNase_PH_C"/>
    <property type="match status" value="2"/>
</dbReference>
<dbReference type="Pfam" id="PF00575">
    <property type="entry name" value="S1"/>
    <property type="match status" value="1"/>
</dbReference>
<dbReference type="PIRSF" id="PIRSF005499">
    <property type="entry name" value="PNPase"/>
    <property type="match status" value="1"/>
</dbReference>
<dbReference type="SMART" id="SM00322">
    <property type="entry name" value="KH"/>
    <property type="match status" value="1"/>
</dbReference>
<dbReference type="SMART" id="SM00316">
    <property type="entry name" value="S1"/>
    <property type="match status" value="1"/>
</dbReference>
<dbReference type="SUPFAM" id="SSF54791">
    <property type="entry name" value="Eukaryotic type KH-domain (KH-domain type I)"/>
    <property type="match status" value="1"/>
</dbReference>
<dbReference type="SUPFAM" id="SSF50249">
    <property type="entry name" value="Nucleic acid-binding proteins"/>
    <property type="match status" value="1"/>
</dbReference>
<dbReference type="SUPFAM" id="SSF46915">
    <property type="entry name" value="Polynucleotide phosphorylase/guanosine pentaphosphate synthase (PNPase/GPSI), domain 3"/>
    <property type="match status" value="1"/>
</dbReference>
<dbReference type="SUPFAM" id="SSF55666">
    <property type="entry name" value="Ribonuclease PH domain 2-like"/>
    <property type="match status" value="2"/>
</dbReference>
<dbReference type="SUPFAM" id="SSF54211">
    <property type="entry name" value="Ribosomal protein S5 domain 2-like"/>
    <property type="match status" value="2"/>
</dbReference>
<dbReference type="PROSITE" id="PS50084">
    <property type="entry name" value="KH_TYPE_1"/>
    <property type="match status" value="1"/>
</dbReference>
<dbReference type="PROSITE" id="PS50126">
    <property type="entry name" value="S1"/>
    <property type="match status" value="1"/>
</dbReference>